<feature type="chain" id="PRO_0000461825" description="HTH-type transcriptional regulator Rv2324">
    <location>
        <begin position="1"/>
        <end position="148"/>
    </location>
</feature>
<feature type="domain" description="HTH asnC-type" evidence="1">
    <location>
        <begin position="4"/>
        <end position="65"/>
    </location>
</feature>
<feature type="DNA-binding region" description="H-T-H motif" evidence="1">
    <location>
        <begin position="23"/>
        <end position="42"/>
    </location>
</feature>
<feature type="mutagenesis site" description="Catalytically inactive mutant that lacks both DNA and ligand binding." evidence="3">
    <original>G</original>
    <variation>A</variation>
    <location>
        <position position="52"/>
    </location>
</feature>
<feature type="mutagenesis site" description="Increases DNA binding affinity by forming high order protein-DNA complexes while decreasing ligand binding." evidence="3">
    <original>G</original>
    <variation>T</variation>
    <location>
        <position position="101"/>
    </location>
</feature>
<feature type="mutagenesis site" description="Reduces DNA binding affinity and does not exhibit amino acid binding." evidence="3">
    <original>D</original>
    <variation>A</variation>
    <location>
        <position position="104"/>
    </location>
</feature>
<protein>
    <recommendedName>
        <fullName evidence="5">HTH-type transcriptional regulator Rv2324</fullName>
    </recommendedName>
    <alternativeName>
        <fullName evidence="4">Feast/famine regulatory protein Rv2324</fullName>
    </alternativeName>
</protein>
<accession>P71888</accession>
<accession>F2GIS3</accession>
<accession>I6X3X3</accession>
<accession>Q7D7B5</accession>
<dbReference type="EMBL" id="AL123456">
    <property type="protein sequence ID" value="CCP45111.1"/>
    <property type="molecule type" value="Genomic_DNA"/>
</dbReference>
<dbReference type="RefSeq" id="NP_216840.1">
    <property type="nucleotide sequence ID" value="NC_000962.3"/>
</dbReference>
<dbReference type="RefSeq" id="WP_003411963.1">
    <property type="nucleotide sequence ID" value="NZ_NVQJ01000012.1"/>
</dbReference>
<dbReference type="SASBDB" id="P71888"/>
<dbReference type="SMR" id="P71888"/>
<dbReference type="STRING" id="83332.Rv2324"/>
<dbReference type="PaxDb" id="83332-Rv2324"/>
<dbReference type="DNASU" id="885060"/>
<dbReference type="GeneID" id="885060"/>
<dbReference type="KEGG" id="mtu:Rv2324"/>
<dbReference type="KEGG" id="mtv:RVBD_2324"/>
<dbReference type="PATRIC" id="fig|83332.111.peg.2588"/>
<dbReference type="TubercuList" id="Rv2324"/>
<dbReference type="eggNOG" id="COG1522">
    <property type="taxonomic scope" value="Bacteria"/>
</dbReference>
<dbReference type="InParanoid" id="P71888"/>
<dbReference type="OrthoDB" id="4379331at2"/>
<dbReference type="PhylomeDB" id="P71888"/>
<dbReference type="Proteomes" id="UP000001584">
    <property type="component" value="Chromosome"/>
</dbReference>
<dbReference type="GO" id="GO:0005829">
    <property type="term" value="C:cytosol"/>
    <property type="evidence" value="ECO:0000318"/>
    <property type="project" value="GO_Central"/>
</dbReference>
<dbReference type="GO" id="GO:0043565">
    <property type="term" value="F:sequence-specific DNA binding"/>
    <property type="evidence" value="ECO:0000318"/>
    <property type="project" value="GO_Central"/>
</dbReference>
<dbReference type="GO" id="GO:0043200">
    <property type="term" value="P:response to amino acid"/>
    <property type="evidence" value="ECO:0000318"/>
    <property type="project" value="GO_Central"/>
</dbReference>
<dbReference type="FunFam" id="1.10.10.10:FF:000192">
    <property type="entry name" value="AsnC family transcriptional regulator"/>
    <property type="match status" value="1"/>
</dbReference>
<dbReference type="FunFam" id="3.30.70.920:FF:000006">
    <property type="entry name" value="AsnC family transcriptional regulator"/>
    <property type="match status" value="1"/>
</dbReference>
<dbReference type="Gene3D" id="3.30.70.920">
    <property type="match status" value="1"/>
</dbReference>
<dbReference type="Gene3D" id="1.10.10.10">
    <property type="entry name" value="Winged helix-like DNA-binding domain superfamily/Winged helix DNA-binding domain"/>
    <property type="match status" value="1"/>
</dbReference>
<dbReference type="InterPro" id="IPR000485">
    <property type="entry name" value="AsnC-type_HTH_dom"/>
</dbReference>
<dbReference type="InterPro" id="IPR011008">
    <property type="entry name" value="Dimeric_a/b-barrel"/>
</dbReference>
<dbReference type="InterPro" id="IPR019888">
    <property type="entry name" value="Tscrpt_reg_AsnC-like"/>
</dbReference>
<dbReference type="InterPro" id="IPR019887">
    <property type="entry name" value="Tscrpt_reg_AsnC/Lrp_C"/>
</dbReference>
<dbReference type="InterPro" id="IPR036388">
    <property type="entry name" value="WH-like_DNA-bd_sf"/>
</dbReference>
<dbReference type="InterPro" id="IPR036390">
    <property type="entry name" value="WH_DNA-bd_sf"/>
</dbReference>
<dbReference type="PANTHER" id="PTHR30154">
    <property type="entry name" value="LEUCINE-RESPONSIVE REGULATORY PROTEIN"/>
    <property type="match status" value="1"/>
</dbReference>
<dbReference type="PANTHER" id="PTHR30154:SF45">
    <property type="entry name" value="TRANSCRIPTIONAL REGULATORY PROTEIN (PROBABLY ASNC-FAMILY)-RELATED"/>
    <property type="match status" value="1"/>
</dbReference>
<dbReference type="Pfam" id="PF01037">
    <property type="entry name" value="AsnC_trans_reg"/>
    <property type="match status" value="1"/>
</dbReference>
<dbReference type="Pfam" id="PF13404">
    <property type="entry name" value="HTH_AsnC-type"/>
    <property type="match status" value="1"/>
</dbReference>
<dbReference type="PRINTS" id="PR00033">
    <property type="entry name" value="HTHASNC"/>
</dbReference>
<dbReference type="SMART" id="SM00344">
    <property type="entry name" value="HTH_ASNC"/>
    <property type="match status" value="1"/>
</dbReference>
<dbReference type="SUPFAM" id="SSF54909">
    <property type="entry name" value="Dimeric alpha+beta barrel"/>
    <property type="match status" value="1"/>
</dbReference>
<dbReference type="SUPFAM" id="SSF46785">
    <property type="entry name" value="Winged helix' DNA-binding domain"/>
    <property type="match status" value="1"/>
</dbReference>
<dbReference type="PROSITE" id="PS50956">
    <property type="entry name" value="HTH_ASNC_2"/>
    <property type="match status" value="1"/>
</dbReference>
<organism>
    <name type="scientific">Mycobacterium tuberculosis (strain ATCC 25618 / H37Rv)</name>
    <dbReference type="NCBI Taxonomy" id="83332"/>
    <lineage>
        <taxon>Bacteria</taxon>
        <taxon>Bacillati</taxon>
        <taxon>Actinomycetota</taxon>
        <taxon>Actinomycetes</taxon>
        <taxon>Mycobacteriales</taxon>
        <taxon>Mycobacteriaceae</taxon>
        <taxon>Mycobacterium</taxon>
        <taxon>Mycobacterium tuberculosis complex</taxon>
    </lineage>
</organism>
<evidence type="ECO:0000255" key="1">
    <source>
        <dbReference type="PROSITE-ProRule" id="PRU00319"/>
    </source>
</evidence>
<evidence type="ECO:0000269" key="2">
    <source>
    </source>
</evidence>
<evidence type="ECO:0000269" key="3">
    <source>
    </source>
</evidence>
<evidence type="ECO:0000303" key="4">
    <source>
    </source>
</evidence>
<evidence type="ECO:0000305" key="5"/>
<evidence type="ECO:0000305" key="6">
    <source>
    </source>
</evidence>
<evidence type="ECO:0000312" key="7">
    <source>
        <dbReference type="EMBL" id="CCP45111.1"/>
    </source>
</evidence>
<name>R2324_MYCTU</name>
<sequence>MDRLDDTDERILAELAEHARATFAEIGHKVSLSAPAVKRRVDRMLESGVIKGFTTVVDRNALGWNTEAYVQIFCHGRIAPDQLRAAWVNIPEVVSAATVTGTSDAILHVLAHDMRHLEAALERIRSSADVERSESTVVLSNLIDRMPP</sequence>
<gene>
    <name evidence="7" type="ordered locus">Rv2324</name>
</gene>
<comment type="function">
    <text evidence="3">Transcriptional regulator involved in growth, DNA replication and damage control (PubMed:37634786). Plays a crucial role in regulating survival and growth of M.tuberculosis (PubMed:37634786). Could function as a global regulator in both the latent/persistent and active phases of growth (PubMed:37634786). Binds to its own promoter region and to promoters of multiple metabolic genes, such as serB2, lat, ald and roc operon (PubMed:37634786). In vitro, interacts with intrinsically curved and non-curved DNA molecules, and with both supercoiled and linear DNA, with higher affinity for supercoiled DNA (PubMed:37634786). Binds to DNA recombination, replication and repair intermediates (PubMed:37634786).</text>
</comment>
<comment type="activity regulation">
    <text evidence="3">The DNA-binding activity of Rv2324 is modulated by interaction of Rv2324 with amino acids (PubMed:37634786). Aspartate is the only effector amino acid that completely abolishes DNA binding (PubMed:37634786). The majority of amino acids induce a dimer-tetramer or dimer-hexamer oligomeric transition (PubMed:37634786). In response to amino-acid binding, adopts an open quaternary association, which is a part of the functional requirement to bind to non-symmetrically distributed target DNA binding sites (PubMed:37634786).</text>
</comment>
<comment type="subunit">
    <text evidence="3">Homodimer (PubMed:37634786). Forms oligomers (PubMed:37634786).</text>
</comment>
<comment type="induction">
    <text evidence="2">6-fold up-regulated in presence of arginine.</text>
</comment>
<comment type="domain">
    <text evidence="6">Contains an N-terminal DNA-binding domain, followed by a linker and a C-terminal effector-binding domain, which is also involved in oligomeric interactions.</text>
</comment>
<comment type="disruption phenotype">
    <text evidence="3">Down-regulation in strain H37Ra reduces growth and lowers M.tuberculosis survival inside resting and IFN-gamma-activated macrophages.</text>
</comment>
<reference key="1">
    <citation type="journal article" date="1998" name="Nature">
        <title>Deciphering the biology of Mycobacterium tuberculosis from the complete genome sequence.</title>
        <authorList>
            <person name="Cole S.T."/>
            <person name="Brosch R."/>
            <person name="Parkhill J."/>
            <person name="Garnier T."/>
            <person name="Churcher C.M."/>
            <person name="Harris D.E."/>
            <person name="Gordon S.V."/>
            <person name="Eiglmeier K."/>
            <person name="Gas S."/>
            <person name="Barry C.E. III"/>
            <person name="Tekaia F."/>
            <person name="Badcock K."/>
            <person name="Basham D."/>
            <person name="Brown D."/>
            <person name="Chillingworth T."/>
            <person name="Connor R."/>
            <person name="Davies R.M."/>
            <person name="Devlin K."/>
            <person name="Feltwell T."/>
            <person name="Gentles S."/>
            <person name="Hamlin N."/>
            <person name="Holroyd S."/>
            <person name="Hornsby T."/>
            <person name="Jagels K."/>
            <person name="Krogh A."/>
            <person name="McLean J."/>
            <person name="Moule S."/>
            <person name="Murphy L.D."/>
            <person name="Oliver S."/>
            <person name="Osborne J."/>
            <person name="Quail M.A."/>
            <person name="Rajandream M.A."/>
            <person name="Rogers J."/>
            <person name="Rutter S."/>
            <person name="Seeger K."/>
            <person name="Skelton S."/>
            <person name="Squares S."/>
            <person name="Squares R."/>
            <person name="Sulston J.E."/>
            <person name="Taylor K."/>
            <person name="Whitehead S."/>
            <person name="Barrell B.G."/>
        </authorList>
    </citation>
    <scope>NUCLEOTIDE SEQUENCE [LARGE SCALE GENOMIC DNA]</scope>
    <source>
        <strain>ATCC 25618 / H37Rv</strain>
    </source>
</reference>
<reference key="2">
    <citation type="journal article" date="2011" name="Mol. Cell. Proteomics">
        <title>Proteogenomic analysis of Mycobacterium tuberculosis by high resolution mass spectrometry.</title>
        <authorList>
            <person name="Kelkar D.S."/>
            <person name="Kumar D."/>
            <person name="Kumar P."/>
            <person name="Balakrishnan L."/>
            <person name="Muthusamy B."/>
            <person name="Yadav A.K."/>
            <person name="Shrivastava P."/>
            <person name="Marimuthu A."/>
            <person name="Anand S."/>
            <person name="Sundaram H."/>
            <person name="Kingsbury R."/>
            <person name="Harsha H.C."/>
            <person name="Nair B."/>
            <person name="Prasad T.S."/>
            <person name="Chauhan D.S."/>
            <person name="Katoch K."/>
            <person name="Katoch V.M."/>
            <person name="Kumar P."/>
            <person name="Chaerkady R."/>
            <person name="Ramachandran S."/>
            <person name="Dash D."/>
            <person name="Pandey A."/>
        </authorList>
    </citation>
    <scope>IDENTIFICATION BY MASS SPECTROMETRY [LARGE SCALE ANALYSIS]</scope>
    <source>
        <strain>ATCC 25618 / H37Rv</strain>
    </source>
</reference>
<reference key="3">
    <citation type="journal article" date="2015" name="PLoS ONE">
        <title>Mycobacterium tuberculosis Is a Natural Ornithine Aminotransferase (rocD) Mutant and Depends on Rv2323c for Growth on Arginine.</title>
        <authorList>
            <person name="Hampel A."/>
            <person name="Huber C."/>
            <person name="Geffers R."/>
            <person name="Spona-Friedl M."/>
            <person name="Eisenreich W."/>
            <person name="Bange F.C."/>
        </authorList>
    </citation>
    <scope>INDUCTION</scope>
    <source>
        <strain>H37Rv</strain>
    </source>
</reference>
<reference key="4">
    <citation type="journal article" date="2023" name="Int. J. Biol. Macromol.">
        <title>Mycobacterium tuberculosis Rv2324 is a multifunctional feast/famine regulatory protein involved in growth, DNA replication and damage control.</title>
        <authorList>
            <person name="Dubey S."/>
            <person name="Maurya R.K."/>
            <person name="Shree S."/>
            <person name="Kumar S."/>
            <person name="Jahan F."/>
            <person name="Krishnan M.Y."/>
            <person name="Ramachandran R."/>
        </authorList>
    </citation>
    <scope>FUNCTION</scope>
    <scope>DNA-BINDING</scope>
    <scope>ACTIVITY REGULATION</scope>
    <scope>SUBUNIT</scope>
    <scope>DISRUPTION PHENOTYPE</scope>
    <scope>MUTAGENESIS OF GLY-52; GLY-101 AND ASP-104</scope>
    <source>
        <strain>H37Rv</strain>
    </source>
</reference>
<keyword id="KW-0238">DNA-binding</keyword>
<keyword id="KW-1185">Reference proteome</keyword>
<keyword id="KW-0804">Transcription</keyword>
<keyword id="KW-0805">Transcription regulation</keyword>
<proteinExistence type="evidence at protein level"/>